<protein>
    <recommendedName>
        <fullName>Transforming protein Maf</fullName>
    </recommendedName>
</protein>
<sequence>MASELAMSGSDLPTSPLAMEYVNDFDLMKFEVKKEPVETDRIISQCGRLIAGGSLSSTPMSTPCSSVPPSPSFSAPSPGSGTDQKTHLEDYYWMTGYPQQLNPEALGFSPEDAVEALINSSHHPLPGAFDGYARGQQLAAAAGGSVPAEEMGSAAAVVSAVIAAAAAQGGAPHYHHHHHHPHHGGGGGGGGHPHGAAPGSAPPSSASSSAAGSGGGGGGGGGGAGGLHHPHHGGGGGGGGLHFDDRFSDEQLVTMSMRELNRQLRGVSKEEVIRLKQKRRTLKNRGYAQSCRFKRVQQRHVLESEKNQLLQQVEHLKQEISRLVRERDAYKEKYEKLVSNGFRENGSSSDNPSSPEFFMYPRESSTTVM</sequence>
<organismHost>
    <name type="scientific">Galliformes</name>
    <dbReference type="NCBI Taxonomy" id="8976"/>
</organismHost>
<accession>P23091</accession>
<organism>
    <name type="scientific">Avian musculoaponeurotic fibrosarcoma virus AS42</name>
    <dbReference type="NCBI Taxonomy" id="11873"/>
    <lineage>
        <taxon>Viruses</taxon>
        <taxon>Riboviria</taxon>
        <taxon>Pararnavirae</taxon>
        <taxon>Artverviricota</taxon>
        <taxon>Revtraviricetes</taxon>
        <taxon>Ortervirales</taxon>
        <taxon>Retroviridae</taxon>
        <taxon>Orthoretrovirinae</taxon>
        <taxon>Alpharetrovirus</taxon>
    </lineage>
</organism>
<feature type="chain" id="PRO_0000076506" description="Transforming protein Maf">
    <location>
        <begin position="1"/>
        <end position="369"/>
    </location>
</feature>
<feature type="domain" description="bZIP" evidence="1">
    <location>
        <begin position="274"/>
        <end position="337"/>
    </location>
</feature>
<feature type="region of interest" description="Disordered" evidence="2">
    <location>
        <begin position="57"/>
        <end position="85"/>
    </location>
</feature>
<feature type="region of interest" description="Disordered" evidence="2">
    <location>
        <begin position="169"/>
        <end position="243"/>
    </location>
</feature>
<feature type="region of interest" description="Basic motif" evidence="1">
    <location>
        <begin position="274"/>
        <end position="299"/>
    </location>
</feature>
<feature type="region of interest" description="Leucine-zipper" evidence="1">
    <location>
        <begin position="302"/>
        <end position="323"/>
    </location>
</feature>
<feature type="region of interest" description="Disordered" evidence="2">
    <location>
        <begin position="341"/>
        <end position="369"/>
    </location>
</feature>
<feature type="compositionally biased region" description="Basic residues" evidence="2">
    <location>
        <begin position="173"/>
        <end position="183"/>
    </location>
</feature>
<feature type="compositionally biased region" description="Gly residues" evidence="2">
    <location>
        <begin position="184"/>
        <end position="193"/>
    </location>
</feature>
<feature type="compositionally biased region" description="Low complexity" evidence="2">
    <location>
        <begin position="194"/>
        <end position="211"/>
    </location>
</feature>
<feature type="compositionally biased region" description="Gly residues" evidence="2">
    <location>
        <begin position="212"/>
        <end position="226"/>
    </location>
</feature>
<feature type="compositionally biased region" description="Polar residues" evidence="2">
    <location>
        <begin position="345"/>
        <end position="354"/>
    </location>
</feature>
<dbReference type="EMBL" id="M26769">
    <property type="protein sequence ID" value="AAA42377.1"/>
    <property type="molecule type" value="Genomic_RNA"/>
</dbReference>
<dbReference type="PIR" id="B33975">
    <property type="entry name" value="TVFVAF"/>
</dbReference>
<dbReference type="SMR" id="P23091"/>
<dbReference type="MINT" id="P23091"/>
<dbReference type="GO" id="GO:0042025">
    <property type="term" value="C:host cell nucleus"/>
    <property type="evidence" value="ECO:0007669"/>
    <property type="project" value="UniProtKB-SubCell"/>
</dbReference>
<dbReference type="GO" id="GO:0000981">
    <property type="term" value="F:DNA-binding transcription factor activity, RNA polymerase II-specific"/>
    <property type="evidence" value="ECO:0007669"/>
    <property type="project" value="TreeGrafter"/>
</dbReference>
<dbReference type="GO" id="GO:0000978">
    <property type="term" value="F:RNA polymerase II cis-regulatory region sequence-specific DNA binding"/>
    <property type="evidence" value="ECO:0007669"/>
    <property type="project" value="TreeGrafter"/>
</dbReference>
<dbReference type="CDD" id="cd14718">
    <property type="entry name" value="bZIP_Maf_large"/>
    <property type="match status" value="1"/>
</dbReference>
<dbReference type="FunFam" id="1.20.5.170:FF:000016">
    <property type="entry name" value="MAF bZIP transcription factor"/>
    <property type="match status" value="1"/>
</dbReference>
<dbReference type="Gene3D" id="1.20.5.170">
    <property type="match status" value="1"/>
</dbReference>
<dbReference type="InterPro" id="IPR004827">
    <property type="entry name" value="bZIP"/>
</dbReference>
<dbReference type="InterPro" id="IPR004826">
    <property type="entry name" value="bZIP_Maf"/>
</dbReference>
<dbReference type="InterPro" id="IPR046347">
    <property type="entry name" value="bZIP_sf"/>
</dbReference>
<dbReference type="InterPro" id="IPR013592">
    <property type="entry name" value="Maf_TF_N"/>
</dbReference>
<dbReference type="InterPro" id="IPR008917">
    <property type="entry name" value="TF_DNA-bd_sf"/>
</dbReference>
<dbReference type="InterPro" id="IPR024874">
    <property type="entry name" value="Transcription_factor_Maf_fam"/>
</dbReference>
<dbReference type="PANTHER" id="PTHR10129">
    <property type="entry name" value="TRANSCRIPTION FACTOR MAF"/>
    <property type="match status" value="1"/>
</dbReference>
<dbReference type="PANTHER" id="PTHR10129:SF9">
    <property type="entry name" value="TRANSCRIPTION FACTOR MAF"/>
    <property type="match status" value="1"/>
</dbReference>
<dbReference type="Pfam" id="PF03131">
    <property type="entry name" value="bZIP_Maf"/>
    <property type="match status" value="1"/>
</dbReference>
<dbReference type="Pfam" id="PF08383">
    <property type="entry name" value="Maf_N"/>
    <property type="match status" value="1"/>
</dbReference>
<dbReference type="SMART" id="SM00338">
    <property type="entry name" value="BRLZ"/>
    <property type="match status" value="1"/>
</dbReference>
<dbReference type="SUPFAM" id="SSF47454">
    <property type="entry name" value="A DNA-binding domain in eukaryotic transcription factors"/>
    <property type="match status" value="1"/>
</dbReference>
<dbReference type="SUPFAM" id="SSF57959">
    <property type="entry name" value="Leucine zipper domain"/>
    <property type="match status" value="1"/>
</dbReference>
<dbReference type="PROSITE" id="PS50217">
    <property type="entry name" value="BZIP"/>
    <property type="match status" value="1"/>
</dbReference>
<gene>
    <name type="primary">V-MAF</name>
</gene>
<reference key="1">
    <citation type="journal article" date="1989" name="Proc. Natl. Acad. Sci. U.S.A.">
        <title>v-maf, a viral oncogene that encodes a 'leucine zipper' motif.</title>
        <authorList>
            <person name="Nishizawa M."/>
            <person name="Kataoka K."/>
            <person name="Goto N."/>
            <person name="Fujiwara K.T."/>
            <person name="Kawai S."/>
        </authorList>
    </citation>
    <scope>NUCLEOTIDE SEQUENCE [GENOMIC RNA]</scope>
</reference>
<proteinExistence type="inferred from homology"/>
<evidence type="ECO:0000255" key="1">
    <source>
        <dbReference type="PROSITE-ProRule" id="PRU00978"/>
    </source>
</evidence>
<evidence type="ECO:0000256" key="2">
    <source>
        <dbReference type="SAM" id="MobiDB-lite"/>
    </source>
</evidence>
<evidence type="ECO:0000305" key="3"/>
<keyword id="KW-0238">DNA-binding</keyword>
<keyword id="KW-1048">Host nucleus</keyword>
<keyword id="KW-0553">Oncogene</keyword>
<keyword id="KW-0804">Transcription</keyword>
<keyword id="KW-0805">Transcription regulation</keyword>
<comment type="function">
    <text>Might be a transcriptional trans-activator.</text>
</comment>
<comment type="subcellular location">
    <subcellularLocation>
        <location>Host nucleus</location>
    </subcellularLocation>
</comment>
<comment type="miscellaneous">
    <text>This protein is synthesized as an Env-Maf polyprotein.</text>
</comment>
<comment type="similarity">
    <text evidence="3">Belongs to the bZIP family. Maf subfamily.</text>
</comment>
<name>MAF_AVIS4</name>